<sequence length="509" mass="59976">MEEIHRYLQPDSSQQHNFLYPLIFQEYIYALAQDHGLNRNRSILLENSGYNNKFSFLIVKRLITRMDQQNHLIISTNDSNKNPFLGCNKSLYSQMISEGFACIVEIPFSIRLISSLSSFEGKKIFKSHNLRSIHSTFPFLEDNFSHLNYVLDILIPYPVHLEILVQTLRYWVKDASSLHLLRFFLHEYCNLNSLITSKKPGYSFSKKNQRFFFFLYNSYVYECESTFVFLRNQSSHLRSTSFGALLERIYFYGKIERLVEAFAKDFQVTLWLFKDPVMHYVRYEGKSILASKGTFPWMNKWKFYLVNFWQCHFSMYFNTGRIHINQLSNHSRDFMGYLSSVRLNHSMVRSQMLENSFLINNPIKKFDTLVPIIPLIGSLAKAHFCTGLGHPISKPVWSDLSDSDIIDRFGRICRNLFHYYSGSSKKKTLYRIKYILRLSCARTLARKHKSTVRTFLKRSGSELLEEFLTSEEEVLSLTFPRASSSLWGVYRSRIWYLDIFCINDLANSQ</sequence>
<feature type="chain" id="PRO_0000277324" description="Maturase K">
    <location>
        <begin position="1"/>
        <end position="509"/>
    </location>
</feature>
<accession>Q2MIB9</accession>
<keyword id="KW-0150">Chloroplast</keyword>
<keyword id="KW-0507">mRNA processing</keyword>
<keyword id="KW-0934">Plastid</keyword>
<keyword id="KW-1185">Reference proteome</keyword>
<keyword id="KW-0694">RNA-binding</keyword>
<keyword id="KW-0819">tRNA processing</keyword>
<protein>
    <recommendedName>
        <fullName evidence="1">Maturase K</fullName>
    </recommendedName>
    <alternativeName>
        <fullName evidence="1">Intron maturase</fullName>
    </alternativeName>
</protein>
<dbReference type="EMBL" id="DQ347959">
    <property type="protein sequence ID" value="ABC56281.1"/>
    <property type="molecule type" value="Genomic_DNA"/>
</dbReference>
<dbReference type="EMBL" id="AM087200">
    <property type="protein sequence ID" value="CAJ32374.1"/>
    <property type="molecule type" value="Genomic_DNA"/>
</dbReference>
<dbReference type="RefSeq" id="AP_004909.1">
    <property type="nucleotide sequence ID" value="AC_000188.1"/>
</dbReference>
<dbReference type="RefSeq" id="YP_008563069.1">
    <property type="nucleotide sequence ID" value="NC_007898.3"/>
</dbReference>
<dbReference type="STRING" id="4081.Q2MIB9"/>
<dbReference type="PaxDb" id="4081-Solyc09g061390.1.1"/>
<dbReference type="GeneID" id="3950477"/>
<dbReference type="KEGG" id="sly:3950477"/>
<dbReference type="eggNOG" id="ENOG502QWRZ">
    <property type="taxonomic scope" value="Eukaryota"/>
</dbReference>
<dbReference type="InParanoid" id="Q2MIB9"/>
<dbReference type="OrthoDB" id="1886907at2759"/>
<dbReference type="Proteomes" id="UP000004994">
    <property type="component" value="Chloroplast"/>
</dbReference>
<dbReference type="ExpressionAtlas" id="Q2MIB9">
    <property type="expression patterns" value="baseline"/>
</dbReference>
<dbReference type="GO" id="GO:0009507">
    <property type="term" value="C:chloroplast"/>
    <property type="evidence" value="ECO:0007669"/>
    <property type="project" value="UniProtKB-SubCell"/>
</dbReference>
<dbReference type="GO" id="GO:0003723">
    <property type="term" value="F:RNA binding"/>
    <property type="evidence" value="ECO:0007669"/>
    <property type="project" value="UniProtKB-KW"/>
</dbReference>
<dbReference type="GO" id="GO:0006397">
    <property type="term" value="P:mRNA processing"/>
    <property type="evidence" value="ECO:0007669"/>
    <property type="project" value="UniProtKB-KW"/>
</dbReference>
<dbReference type="GO" id="GO:0008380">
    <property type="term" value="P:RNA splicing"/>
    <property type="evidence" value="ECO:0007669"/>
    <property type="project" value="UniProtKB-UniRule"/>
</dbReference>
<dbReference type="GO" id="GO:0008033">
    <property type="term" value="P:tRNA processing"/>
    <property type="evidence" value="ECO:0007669"/>
    <property type="project" value="UniProtKB-KW"/>
</dbReference>
<dbReference type="HAMAP" id="MF_01390">
    <property type="entry name" value="MatK"/>
    <property type="match status" value="1"/>
</dbReference>
<dbReference type="InterPro" id="IPR024937">
    <property type="entry name" value="Domain_X"/>
</dbReference>
<dbReference type="InterPro" id="IPR002866">
    <property type="entry name" value="Maturase_MatK"/>
</dbReference>
<dbReference type="InterPro" id="IPR024942">
    <property type="entry name" value="Maturase_MatK_N"/>
</dbReference>
<dbReference type="PANTHER" id="PTHR34811">
    <property type="entry name" value="MATURASE K"/>
    <property type="match status" value="1"/>
</dbReference>
<dbReference type="PANTHER" id="PTHR34811:SF1">
    <property type="entry name" value="MATURASE K"/>
    <property type="match status" value="1"/>
</dbReference>
<dbReference type="Pfam" id="PF01348">
    <property type="entry name" value="Intron_maturas2"/>
    <property type="match status" value="1"/>
</dbReference>
<dbReference type="Pfam" id="PF01824">
    <property type="entry name" value="MatK_N"/>
    <property type="match status" value="1"/>
</dbReference>
<geneLocation type="chloroplast"/>
<evidence type="ECO:0000255" key="1">
    <source>
        <dbReference type="HAMAP-Rule" id="MF_01390"/>
    </source>
</evidence>
<reference key="1">
    <citation type="journal article" date="2006" name="Theor. Appl. Genet.">
        <title>Complete chloroplast genome sequences of Solanum bulbocastanum, Solanum lycopersicum and comparative analyses with other Solanaceae genomes.</title>
        <authorList>
            <person name="Daniell H."/>
            <person name="Lee S.-B."/>
            <person name="Grevich J."/>
            <person name="Saski C."/>
            <person name="Quesada-Vargas T."/>
            <person name="Guda C."/>
            <person name="Tomkins J."/>
            <person name="Jansen R.K."/>
        </authorList>
    </citation>
    <scope>NUCLEOTIDE SEQUENCE [LARGE SCALE GENOMIC DNA]</scope>
    <source>
        <strain>cv. LA3023</strain>
    </source>
</reference>
<reference key="2">
    <citation type="journal article" date="2006" name="J. Mol. Evol.">
        <title>Sequence of the tomato chloroplast DNA and evolutionary comparison of solanaceous plastid genomes.</title>
        <authorList>
            <person name="Kahlau S."/>
            <person name="Aspinall S."/>
            <person name="Gray J.C."/>
            <person name="Bock R."/>
        </authorList>
    </citation>
    <scope>NUCLEOTIDE SEQUENCE [LARGE SCALE GENOMIC DNA]</scope>
    <source>
        <strain>cv. IPA-6</strain>
    </source>
</reference>
<organism>
    <name type="scientific">Solanum lycopersicum</name>
    <name type="common">Tomato</name>
    <name type="synonym">Lycopersicon esculentum</name>
    <dbReference type="NCBI Taxonomy" id="4081"/>
    <lineage>
        <taxon>Eukaryota</taxon>
        <taxon>Viridiplantae</taxon>
        <taxon>Streptophyta</taxon>
        <taxon>Embryophyta</taxon>
        <taxon>Tracheophyta</taxon>
        <taxon>Spermatophyta</taxon>
        <taxon>Magnoliopsida</taxon>
        <taxon>eudicotyledons</taxon>
        <taxon>Gunneridae</taxon>
        <taxon>Pentapetalae</taxon>
        <taxon>asterids</taxon>
        <taxon>lamiids</taxon>
        <taxon>Solanales</taxon>
        <taxon>Solanaceae</taxon>
        <taxon>Solanoideae</taxon>
        <taxon>Solaneae</taxon>
        <taxon>Solanum</taxon>
        <taxon>Solanum subgen. Lycopersicon</taxon>
    </lineage>
</organism>
<gene>
    <name evidence="1" type="primary">matK</name>
</gene>
<proteinExistence type="inferred from homology"/>
<name>MATK_SOLLC</name>
<comment type="function">
    <text evidence="1">Usually encoded in the trnK tRNA gene intron. Probably assists in splicing its own and other chloroplast group II introns.</text>
</comment>
<comment type="subcellular location">
    <subcellularLocation>
        <location>Plastid</location>
        <location>Chloroplast</location>
    </subcellularLocation>
</comment>
<comment type="similarity">
    <text evidence="1">Belongs to the intron maturase 2 family. MatK subfamily.</text>
</comment>